<geneLocation type="chloroplast"/>
<feature type="chain" id="PRO_0000277144" description="Photosystem I reaction center subunit XI">
    <location>
        <begin position="1"/>
        <end position="145"/>
    </location>
</feature>
<feature type="transmembrane region" description="Helical" evidence="1">
    <location>
        <begin position="48"/>
        <end position="68"/>
    </location>
</feature>
<feature type="transmembrane region" description="Helical" evidence="1">
    <location>
        <begin position="75"/>
        <end position="95"/>
    </location>
</feature>
<feature type="transmembrane region" description="Helical" evidence="1">
    <location>
        <begin position="125"/>
        <end position="145"/>
    </location>
</feature>
<comment type="subcellular location">
    <subcellularLocation>
        <location evidence="1">Plastid</location>
        <location evidence="1">Chloroplast thylakoid membrane</location>
        <topology evidence="1">Multi-pass membrane protein</topology>
    </subcellularLocation>
</comment>
<comment type="similarity">
    <text evidence="1">Belongs to the PsaL family.</text>
</comment>
<accession>Q4G3B5</accession>
<proteinExistence type="inferred from homology"/>
<name>PSAL_EMIHU</name>
<gene>
    <name evidence="1" type="primary">psaL</name>
</gene>
<organism>
    <name type="scientific">Emiliania huxleyi</name>
    <name type="common">Coccolithophore</name>
    <name type="synonym">Pontosphaera huxleyi</name>
    <dbReference type="NCBI Taxonomy" id="2903"/>
    <lineage>
        <taxon>Eukaryota</taxon>
        <taxon>Haptista</taxon>
        <taxon>Haptophyta</taxon>
        <taxon>Prymnesiophyceae</taxon>
        <taxon>Isochrysidales</taxon>
        <taxon>Noelaerhabdaceae</taxon>
        <taxon>Emiliania</taxon>
    </lineage>
</organism>
<keyword id="KW-0150">Chloroplast</keyword>
<keyword id="KW-0472">Membrane</keyword>
<keyword id="KW-0602">Photosynthesis</keyword>
<keyword id="KW-0603">Photosystem I</keyword>
<keyword id="KW-0934">Plastid</keyword>
<keyword id="KW-0793">Thylakoid</keyword>
<keyword id="KW-0812">Transmembrane</keyword>
<keyword id="KW-1133">Transmembrane helix</keyword>
<evidence type="ECO:0000255" key="1">
    <source>
        <dbReference type="HAMAP-Rule" id="MF_00447"/>
    </source>
</evidence>
<dbReference type="EMBL" id="AY741371">
    <property type="protein sequence ID" value="AAX13851.1"/>
    <property type="molecule type" value="Genomic_DNA"/>
</dbReference>
<dbReference type="RefSeq" id="YP_277352.1">
    <property type="nucleotide sequence ID" value="NC_007288.1"/>
</dbReference>
<dbReference type="SMR" id="Q4G3B5"/>
<dbReference type="STRING" id="2903.Q4G3B5"/>
<dbReference type="GeneID" id="3562425"/>
<dbReference type="GO" id="GO:0009535">
    <property type="term" value="C:chloroplast thylakoid membrane"/>
    <property type="evidence" value="ECO:0007669"/>
    <property type="project" value="UniProtKB-SubCell"/>
</dbReference>
<dbReference type="GO" id="GO:0009538">
    <property type="term" value="C:photosystem I reaction center"/>
    <property type="evidence" value="ECO:0007669"/>
    <property type="project" value="InterPro"/>
</dbReference>
<dbReference type="GO" id="GO:0015979">
    <property type="term" value="P:photosynthesis"/>
    <property type="evidence" value="ECO:0007669"/>
    <property type="project" value="UniProtKB-UniRule"/>
</dbReference>
<dbReference type="Gene3D" id="1.20.1240.10">
    <property type="entry name" value="Photosystem I PsaL, reaction centre subunit XI"/>
    <property type="match status" value="1"/>
</dbReference>
<dbReference type="HAMAP" id="MF_00447">
    <property type="entry name" value="PSI_PsaL"/>
    <property type="match status" value="1"/>
</dbReference>
<dbReference type="InterPro" id="IPR003757">
    <property type="entry name" value="PSI_PsaL"/>
</dbReference>
<dbReference type="InterPro" id="IPR036592">
    <property type="entry name" value="PSI_PsaL_sf"/>
</dbReference>
<dbReference type="InterPro" id="IPR022980">
    <property type="entry name" value="PSI_suXI"/>
</dbReference>
<dbReference type="PANTHER" id="PTHR34803">
    <property type="entry name" value="PHOTOSYSTEM I REACTION CENTER SUBUNIT XI, CHLOROPLASTIC"/>
    <property type="match status" value="1"/>
</dbReference>
<dbReference type="PANTHER" id="PTHR34803:SF2">
    <property type="entry name" value="PHOTOSYSTEM I REACTION CENTER SUBUNIT XI, CHLOROPLASTIC"/>
    <property type="match status" value="1"/>
</dbReference>
<dbReference type="Pfam" id="PF02605">
    <property type="entry name" value="PsaL"/>
    <property type="match status" value="1"/>
</dbReference>
<dbReference type="SUPFAM" id="SSF81568">
    <property type="entry name" value="Photosystem I reaction center subunit XI, PsaL"/>
    <property type="match status" value="1"/>
</dbReference>
<reference key="1">
    <citation type="journal article" date="2005" name="DNA Res.">
        <title>The complete plastid genome sequence of the haptophyte Emiliania huxleyi: a comparison to other plastid genomes.</title>
        <authorList>
            <person name="Sanchez-Puerta M.V."/>
            <person name="Bachvaroff T.R."/>
            <person name="Delwiche C.F."/>
        </authorList>
    </citation>
    <scope>NUCLEOTIDE SEQUENCE [LARGE SCALE GENOMIC DNA]</scope>
    <source>
        <strain>CCMP373 / CSIRO-CS-57 / BT6</strain>
    </source>
</reference>
<protein>
    <recommendedName>
        <fullName evidence="1">Photosystem I reaction center subunit XI</fullName>
    </recommendedName>
    <alternativeName>
        <fullName evidence="1">PSI subunit V</fullName>
    </alternativeName>
    <alternativeName>
        <fullName evidence="1">PSI-L</fullName>
    </alternativeName>
</protein>
<sequence length="145" mass="15480">MSEFVKPYNNDPFVGNLSTPVTTSTATKLYLGNLPIYRKGLSPLLRGLEIGMAHGYFLIGPFYILGPLRNSPNALLVGLFSAFGLILILTLGLTIYGLASFQGTEGGENLESAKGWRNFTSGFSIGAFGGASVAYVLLDNISFFA</sequence>